<comment type="function">
    <text evidence="3">Part of a heterotetrameric complex that catalyzes the two-step biosynthesis of anthranilate, an intermediate in the biosynthesis of L-tryptophan. In the first step, the glutamine-binding beta subunit (TrpG) of anthranilate synthase (AS) provides the glutamine amidotransferase activity which generates ammonia as a substrate that, along with chorismate, is used in the second step, catalyzed by the large alpha subunit of AS (TrpE) to produce anthranilate. In the absence of TrpG, TrpE can synthesize anthranilate directly from chorismate and high concentrations of ammonia.</text>
</comment>
<comment type="catalytic activity">
    <reaction>
        <text>chorismate + L-glutamine = anthranilate + pyruvate + L-glutamate + H(+)</text>
        <dbReference type="Rhea" id="RHEA:21732"/>
        <dbReference type="ChEBI" id="CHEBI:15361"/>
        <dbReference type="ChEBI" id="CHEBI:15378"/>
        <dbReference type="ChEBI" id="CHEBI:16567"/>
        <dbReference type="ChEBI" id="CHEBI:29748"/>
        <dbReference type="ChEBI" id="CHEBI:29985"/>
        <dbReference type="ChEBI" id="CHEBI:58359"/>
        <dbReference type="EC" id="4.1.3.27"/>
    </reaction>
</comment>
<comment type="cofactor">
    <cofactor evidence="2">
        <name>Mg(2+)</name>
        <dbReference type="ChEBI" id="CHEBI:18420"/>
    </cofactor>
    <text evidence="2">Binds 1 Mg(2+) ion per subunit.</text>
</comment>
<comment type="activity regulation">
    <text evidence="1">Feedback inhibited by tryptophan.</text>
</comment>
<comment type="pathway">
    <text>Amino-acid biosynthesis; L-tryptophan biosynthesis; L-tryptophan from chorismate: step 1/5.</text>
</comment>
<comment type="subunit">
    <text evidence="1">Heterotetramer consisting of two non-identical subunits: a beta subunit (TrpG) and a large alpha subunit (TrpE).</text>
</comment>
<comment type="disruption phenotype">
    <text evidence="3">Cells lacking this gene are unable to grow.</text>
</comment>
<comment type="similarity">
    <text evidence="4">Belongs to the anthranilate synthase component I family.</text>
</comment>
<organism>
    <name type="scientific">Pseudomonas putida</name>
    <name type="common">Arthrobacter siderocapsulatus</name>
    <dbReference type="NCBI Taxonomy" id="303"/>
    <lineage>
        <taxon>Bacteria</taxon>
        <taxon>Pseudomonadati</taxon>
        <taxon>Pseudomonadota</taxon>
        <taxon>Gammaproteobacteria</taxon>
        <taxon>Pseudomonadales</taxon>
        <taxon>Pseudomonadaceae</taxon>
        <taxon>Pseudomonas</taxon>
    </lineage>
</organism>
<reference key="1">
    <citation type="journal article" date="1990" name="J. Bacteriol.">
        <title>Evolutionary differences in chromosomal locations of four early genes of the tryptophan pathway in fluorescent pseudomonads: DNA sequences and characterization of Pseudomonas putida trpE and trpGDC.</title>
        <authorList>
            <person name="Essar D.W."/>
            <person name="Eberly L."/>
            <person name="Crawford I.P."/>
        </authorList>
    </citation>
    <scope>NUCLEOTIDE SEQUENCE [GENOMIC DNA]</scope>
    <scope>FUNCTION</scope>
    <scope>DISRUPTION PHENOTYPE</scope>
    <source>
        <strain>ATCC 23287 / C1S</strain>
    </source>
</reference>
<dbReference type="EC" id="4.1.3.27"/>
<dbReference type="EMBL" id="M33799">
    <property type="protein sequence ID" value="AAA80551.1"/>
    <property type="molecule type" value="Genomic_DNA"/>
</dbReference>
<dbReference type="PIR" id="E35115">
    <property type="entry name" value="E35115"/>
</dbReference>
<dbReference type="SMR" id="P20579"/>
<dbReference type="eggNOG" id="COG0147">
    <property type="taxonomic scope" value="Bacteria"/>
</dbReference>
<dbReference type="SABIO-RK" id="P20579"/>
<dbReference type="STRENDA-DB" id="ILEWV0">
    <property type="experiment" value="Glutamine-dependent formation of anthranilate by anthranilate synthase from Pseudomonas putida"/>
</dbReference>
<dbReference type="UniPathway" id="UPA00035">
    <property type="reaction ID" value="UER00040"/>
</dbReference>
<dbReference type="GO" id="GO:0004049">
    <property type="term" value="F:anthranilate synthase activity"/>
    <property type="evidence" value="ECO:0007669"/>
    <property type="project" value="UniProtKB-EC"/>
</dbReference>
<dbReference type="GO" id="GO:0046872">
    <property type="term" value="F:metal ion binding"/>
    <property type="evidence" value="ECO:0007669"/>
    <property type="project" value="UniProtKB-KW"/>
</dbReference>
<dbReference type="GO" id="GO:0000162">
    <property type="term" value="P:L-tryptophan biosynthetic process"/>
    <property type="evidence" value="ECO:0007669"/>
    <property type="project" value="UniProtKB-UniPathway"/>
</dbReference>
<dbReference type="Gene3D" id="3.60.120.10">
    <property type="entry name" value="Anthranilate synthase"/>
    <property type="match status" value="1"/>
</dbReference>
<dbReference type="InterPro" id="IPR005801">
    <property type="entry name" value="ADC_synthase"/>
</dbReference>
<dbReference type="InterPro" id="IPR019999">
    <property type="entry name" value="Anth_synth_I-like"/>
</dbReference>
<dbReference type="InterPro" id="IPR006805">
    <property type="entry name" value="Anth_synth_I_N"/>
</dbReference>
<dbReference type="InterPro" id="IPR005256">
    <property type="entry name" value="Anth_synth_I_PabB"/>
</dbReference>
<dbReference type="InterPro" id="IPR015890">
    <property type="entry name" value="Chorismate_C"/>
</dbReference>
<dbReference type="NCBIfam" id="TIGR00564">
    <property type="entry name" value="trpE_most"/>
    <property type="match status" value="1"/>
</dbReference>
<dbReference type="PANTHER" id="PTHR11236">
    <property type="entry name" value="AMINOBENZOATE/ANTHRANILATE SYNTHASE"/>
    <property type="match status" value="1"/>
</dbReference>
<dbReference type="PANTHER" id="PTHR11236:SF48">
    <property type="entry name" value="ISOCHORISMATE SYNTHASE MENF"/>
    <property type="match status" value="1"/>
</dbReference>
<dbReference type="Pfam" id="PF04715">
    <property type="entry name" value="Anth_synt_I_N"/>
    <property type="match status" value="1"/>
</dbReference>
<dbReference type="Pfam" id="PF00425">
    <property type="entry name" value="Chorismate_bind"/>
    <property type="match status" value="1"/>
</dbReference>
<dbReference type="PRINTS" id="PR00095">
    <property type="entry name" value="ANTSNTHASEI"/>
</dbReference>
<dbReference type="SUPFAM" id="SSF56322">
    <property type="entry name" value="ADC synthase"/>
    <property type="match status" value="1"/>
</dbReference>
<protein>
    <recommendedName>
        <fullName>Anthranilate synthase component 1</fullName>
        <shortName>AS</shortName>
        <shortName>ASI</shortName>
        <ecNumber>4.1.3.27</ecNumber>
    </recommendedName>
</protein>
<sequence>MNREEFLRLAAVGYNRIPLACETLADFDTPLSIYLKLADQPNSYLLESVQGGEKWGRYSMIGLPSRTVMRVHGYHVSILHDGVEVESHDVEDPLAFVESFKDRYKVADIPGLPRFNGGLVGYFGYDCVRYVEKRLGVSPNPDPLGVPDILLMVSDAVVVFDNLAGKMHAIVLVDPAEEQAFEQGQARLQGLLETLRQPITPRRGLDLSGPQAAEPEFRSSYTREDYENAVGRIKEYILAGDCMQVVPSQRMSIDFKAAPIDLYRALRCFNPTPYMYFFNFGDFHVVGSSPEVLVRVEDNLVTVRPIAGTRPRGATEEADRALEDDLLSDDKEIAEHLMLIDLGRNDVGRVSSTGSVRLTEKMVIERYSNVMHIVSNVAGQLREGLTAMDALRAILPAGTLSGAPKIRAMEIIDELEPVKRGVYGGAVGYFAWNGNMDTAIAIRTAVINDGELHVQAGGGIVADSVPALEWEETINKRRAMFRAVALAEQTSAK</sequence>
<feature type="chain" id="PRO_0000154107" description="Anthranilate synthase component 1">
    <location>
        <begin position="1"/>
        <end position="493"/>
    </location>
</feature>
<feature type="binding site" evidence="2">
    <location>
        <position position="48"/>
    </location>
    <ligand>
        <name>L-tryptophan</name>
        <dbReference type="ChEBI" id="CHEBI:57912"/>
    </ligand>
</feature>
<feature type="binding site" evidence="2">
    <location>
        <begin position="273"/>
        <end position="275"/>
    </location>
    <ligand>
        <name>L-tryptophan</name>
        <dbReference type="ChEBI" id="CHEBI:57912"/>
    </ligand>
</feature>
<feature type="binding site" evidence="2">
    <location>
        <begin position="308"/>
        <end position="309"/>
    </location>
    <ligand>
        <name>chorismate</name>
        <dbReference type="ChEBI" id="CHEBI:29748"/>
    </ligand>
</feature>
<feature type="binding site" evidence="2">
    <location>
        <position position="335"/>
    </location>
    <ligand>
        <name>Mg(2+)</name>
        <dbReference type="ChEBI" id="CHEBI:18420"/>
    </ligand>
</feature>
<feature type="binding site" evidence="2">
    <location>
        <position position="423"/>
    </location>
    <ligand>
        <name>chorismate</name>
        <dbReference type="ChEBI" id="CHEBI:29748"/>
    </ligand>
</feature>
<feature type="binding site" evidence="2">
    <location>
        <position position="443"/>
    </location>
    <ligand>
        <name>chorismate</name>
        <dbReference type="ChEBI" id="CHEBI:29748"/>
    </ligand>
</feature>
<feature type="binding site" evidence="2">
    <location>
        <begin position="457"/>
        <end position="459"/>
    </location>
    <ligand>
        <name>chorismate</name>
        <dbReference type="ChEBI" id="CHEBI:29748"/>
    </ligand>
</feature>
<feature type="binding site" evidence="2">
    <location>
        <position position="459"/>
    </location>
    <ligand>
        <name>chorismate</name>
        <dbReference type="ChEBI" id="CHEBI:29748"/>
    </ligand>
</feature>
<feature type="binding site" evidence="2">
    <location>
        <position position="472"/>
    </location>
    <ligand>
        <name>Mg(2+)</name>
        <dbReference type="ChEBI" id="CHEBI:18420"/>
    </ligand>
</feature>
<name>TRPE_PSEPU</name>
<gene>
    <name type="primary">trpE</name>
</gene>
<accession>P20579</accession>
<evidence type="ECO:0000250" key="1"/>
<evidence type="ECO:0000250" key="2">
    <source>
        <dbReference type="UniProtKB" id="P00897"/>
    </source>
</evidence>
<evidence type="ECO:0000269" key="3">
    <source>
    </source>
</evidence>
<evidence type="ECO:0000305" key="4"/>
<proteinExistence type="inferred from homology"/>
<keyword id="KW-0028">Amino-acid biosynthesis</keyword>
<keyword id="KW-0057">Aromatic amino acid biosynthesis</keyword>
<keyword id="KW-0456">Lyase</keyword>
<keyword id="KW-0460">Magnesium</keyword>
<keyword id="KW-0479">Metal-binding</keyword>
<keyword id="KW-0822">Tryptophan biosynthesis</keyword>